<keyword id="KW-1185">Reference proteome</keyword>
<keyword id="KW-0687">Ribonucleoprotein</keyword>
<keyword id="KW-0689">Ribosomal protein</keyword>
<evidence type="ECO:0000255" key="1">
    <source>
        <dbReference type="HAMAP-Rule" id="MF_00402"/>
    </source>
</evidence>
<evidence type="ECO:0000305" key="2"/>
<reference key="1">
    <citation type="journal article" date="2005" name="Genome Res.">
        <title>Coping with cold: the genome of the versatile marine Antarctica bacterium Pseudoalteromonas haloplanktis TAC125.</title>
        <authorList>
            <person name="Medigue C."/>
            <person name="Krin E."/>
            <person name="Pascal G."/>
            <person name="Barbe V."/>
            <person name="Bernsel A."/>
            <person name="Bertin P.N."/>
            <person name="Cheung F."/>
            <person name="Cruveiller S."/>
            <person name="D'Amico S."/>
            <person name="Duilio A."/>
            <person name="Fang G."/>
            <person name="Feller G."/>
            <person name="Ho C."/>
            <person name="Mangenot S."/>
            <person name="Marino G."/>
            <person name="Nilsson J."/>
            <person name="Parrilli E."/>
            <person name="Rocha E.P.C."/>
            <person name="Rouy Z."/>
            <person name="Sekowska A."/>
            <person name="Tutino M.L."/>
            <person name="Vallenet D."/>
            <person name="von Heijne G."/>
            <person name="Danchin A."/>
        </authorList>
    </citation>
    <scope>NUCLEOTIDE SEQUENCE [LARGE SCALE GENOMIC DNA]</scope>
    <source>
        <strain>TAC 125</strain>
    </source>
</reference>
<proteinExistence type="inferred from homology"/>
<gene>
    <name evidence="1" type="primary">rplS</name>
    <name type="ordered locus">PSHAa0947</name>
</gene>
<feature type="chain" id="PRO_0000226861" description="Large ribosomal subunit protein bL19">
    <location>
        <begin position="1"/>
        <end position="119"/>
    </location>
</feature>
<accession>Q3IEC6</accession>
<comment type="function">
    <text evidence="1">This protein is located at the 30S-50S ribosomal subunit interface and may play a role in the structure and function of the aminoacyl-tRNA binding site.</text>
</comment>
<comment type="similarity">
    <text evidence="1">Belongs to the bacterial ribosomal protein bL19 family.</text>
</comment>
<organism>
    <name type="scientific">Pseudoalteromonas translucida (strain TAC 125)</name>
    <dbReference type="NCBI Taxonomy" id="326442"/>
    <lineage>
        <taxon>Bacteria</taxon>
        <taxon>Pseudomonadati</taxon>
        <taxon>Pseudomonadota</taxon>
        <taxon>Gammaproteobacteria</taxon>
        <taxon>Alteromonadales</taxon>
        <taxon>Pseudoalteromonadaceae</taxon>
        <taxon>Pseudoalteromonas</taxon>
    </lineage>
</organism>
<dbReference type="EMBL" id="CR954246">
    <property type="protein sequence ID" value="CAI86025.1"/>
    <property type="molecule type" value="Genomic_DNA"/>
</dbReference>
<dbReference type="SMR" id="Q3IEC6"/>
<dbReference type="STRING" id="326442.PSHAa0947"/>
<dbReference type="KEGG" id="pha:PSHAa0947"/>
<dbReference type="eggNOG" id="COG0335">
    <property type="taxonomic scope" value="Bacteria"/>
</dbReference>
<dbReference type="HOGENOM" id="CLU_103507_2_1_6"/>
<dbReference type="BioCyc" id="PHAL326442:PSHA_RS04615-MONOMER"/>
<dbReference type="Proteomes" id="UP000006843">
    <property type="component" value="Chromosome I"/>
</dbReference>
<dbReference type="GO" id="GO:0022625">
    <property type="term" value="C:cytosolic large ribosomal subunit"/>
    <property type="evidence" value="ECO:0007669"/>
    <property type="project" value="TreeGrafter"/>
</dbReference>
<dbReference type="GO" id="GO:0003735">
    <property type="term" value="F:structural constituent of ribosome"/>
    <property type="evidence" value="ECO:0007669"/>
    <property type="project" value="InterPro"/>
</dbReference>
<dbReference type="GO" id="GO:0006412">
    <property type="term" value="P:translation"/>
    <property type="evidence" value="ECO:0007669"/>
    <property type="project" value="UniProtKB-UniRule"/>
</dbReference>
<dbReference type="FunFam" id="2.30.30.790:FF:000001">
    <property type="entry name" value="50S ribosomal protein L19"/>
    <property type="match status" value="1"/>
</dbReference>
<dbReference type="Gene3D" id="2.30.30.790">
    <property type="match status" value="1"/>
</dbReference>
<dbReference type="HAMAP" id="MF_00402">
    <property type="entry name" value="Ribosomal_bL19"/>
    <property type="match status" value="1"/>
</dbReference>
<dbReference type="InterPro" id="IPR001857">
    <property type="entry name" value="Ribosomal_bL19"/>
</dbReference>
<dbReference type="InterPro" id="IPR018257">
    <property type="entry name" value="Ribosomal_bL19_CS"/>
</dbReference>
<dbReference type="InterPro" id="IPR038657">
    <property type="entry name" value="Ribosomal_bL19_sf"/>
</dbReference>
<dbReference type="InterPro" id="IPR008991">
    <property type="entry name" value="Translation_prot_SH3-like_sf"/>
</dbReference>
<dbReference type="NCBIfam" id="TIGR01024">
    <property type="entry name" value="rplS_bact"/>
    <property type="match status" value="1"/>
</dbReference>
<dbReference type="PANTHER" id="PTHR15680:SF9">
    <property type="entry name" value="LARGE RIBOSOMAL SUBUNIT PROTEIN BL19M"/>
    <property type="match status" value="1"/>
</dbReference>
<dbReference type="PANTHER" id="PTHR15680">
    <property type="entry name" value="RIBOSOMAL PROTEIN L19"/>
    <property type="match status" value="1"/>
</dbReference>
<dbReference type="Pfam" id="PF01245">
    <property type="entry name" value="Ribosomal_L19"/>
    <property type="match status" value="1"/>
</dbReference>
<dbReference type="PIRSF" id="PIRSF002191">
    <property type="entry name" value="Ribosomal_L19"/>
    <property type="match status" value="1"/>
</dbReference>
<dbReference type="PRINTS" id="PR00061">
    <property type="entry name" value="RIBOSOMALL19"/>
</dbReference>
<dbReference type="SUPFAM" id="SSF50104">
    <property type="entry name" value="Translation proteins SH3-like domain"/>
    <property type="match status" value="1"/>
</dbReference>
<dbReference type="PROSITE" id="PS01015">
    <property type="entry name" value="RIBOSOMAL_L19"/>
    <property type="match status" value="1"/>
</dbReference>
<name>RL19_PSET1</name>
<sequence length="119" mass="13329">MAKVNQNIIKALEDEQLKTDVPAFGAGDTVVVQVKVKEGAKERLQAFEGVVIAKRNRGLHSAFTVRKISNGEGVERVFQTHSPLIDSVTVKRRGAVRRAKLYYLRERSGKSARIREKLN</sequence>
<protein>
    <recommendedName>
        <fullName evidence="1">Large ribosomal subunit protein bL19</fullName>
    </recommendedName>
    <alternativeName>
        <fullName evidence="2">50S ribosomal protein L19</fullName>
    </alternativeName>
</protein>